<evidence type="ECO:0000255" key="1"/>
<evidence type="ECO:0000255" key="2">
    <source>
        <dbReference type="PROSITE-ProRule" id="PRU00521"/>
    </source>
</evidence>
<evidence type="ECO:0000269" key="3">
    <source>
    </source>
</evidence>
<evidence type="ECO:0007829" key="4">
    <source>
        <dbReference type="PDB" id="8KGG"/>
    </source>
</evidence>
<feature type="chain" id="PRO_0000070034" description="Putative P2Y purinoceptor 10">
    <location>
        <begin position="1"/>
        <end position="339"/>
    </location>
</feature>
<feature type="topological domain" description="Extracellular" evidence="1">
    <location>
        <begin position="1"/>
        <end position="39"/>
    </location>
</feature>
<feature type="transmembrane region" description="Helical; Name=1" evidence="1">
    <location>
        <begin position="40"/>
        <end position="60"/>
    </location>
</feature>
<feature type="topological domain" description="Cytoplasmic" evidence="1">
    <location>
        <begin position="61"/>
        <end position="68"/>
    </location>
</feature>
<feature type="transmembrane region" description="Helical; Name=2" evidence="1">
    <location>
        <begin position="69"/>
        <end position="89"/>
    </location>
</feature>
<feature type="topological domain" description="Extracellular" evidence="1">
    <location>
        <begin position="90"/>
        <end position="103"/>
    </location>
</feature>
<feature type="transmembrane region" description="Helical; Name=3" evidence="1">
    <location>
        <begin position="104"/>
        <end position="124"/>
    </location>
</feature>
<feature type="topological domain" description="Cytoplasmic" evidence="1">
    <location>
        <begin position="125"/>
        <end position="149"/>
    </location>
</feature>
<feature type="transmembrane region" description="Helical; Name=4" evidence="1">
    <location>
        <begin position="150"/>
        <end position="170"/>
    </location>
</feature>
<feature type="topological domain" description="Extracellular" evidence="1">
    <location>
        <begin position="171"/>
        <end position="193"/>
    </location>
</feature>
<feature type="transmembrane region" description="Helical; Name=5" evidence="1">
    <location>
        <begin position="194"/>
        <end position="214"/>
    </location>
</feature>
<feature type="topological domain" description="Cytoplasmic" evidence="1">
    <location>
        <begin position="215"/>
        <end position="244"/>
    </location>
</feature>
<feature type="transmembrane region" description="Helical; Name=6" evidence="1">
    <location>
        <begin position="245"/>
        <end position="265"/>
    </location>
</feature>
<feature type="topological domain" description="Extracellular" evidence="1">
    <location>
        <begin position="266"/>
        <end position="288"/>
    </location>
</feature>
<feature type="transmembrane region" description="Helical; Name=7" evidence="1">
    <location>
        <begin position="289"/>
        <end position="309"/>
    </location>
</feature>
<feature type="topological domain" description="Cytoplasmic" evidence="1">
    <location>
        <begin position="310"/>
        <end position="339"/>
    </location>
</feature>
<feature type="glycosylation site" description="N-linked (GlcNAc...) asparagine" evidence="1">
    <location>
        <position position="16"/>
    </location>
</feature>
<feature type="glycosylation site" description="N-linked (GlcNAc...) asparagine" evidence="1">
    <location>
        <position position="26"/>
    </location>
</feature>
<feature type="glycosylation site" description="N-linked (GlcNAc...) asparagine" evidence="1">
    <location>
        <position position="178"/>
    </location>
</feature>
<feature type="disulfide bond" evidence="2">
    <location>
        <begin position="106"/>
        <end position="181"/>
    </location>
</feature>
<feature type="sequence variant" id="VAR_033481" description="In dbSNP:rs6618868.">
    <original>N</original>
    <variation>H</variation>
    <location>
        <position position="3"/>
    </location>
</feature>
<feature type="helix" evidence="4">
    <location>
        <begin position="33"/>
        <end position="59"/>
    </location>
</feature>
<feature type="helix" evidence="4">
    <location>
        <begin position="70"/>
        <end position="84"/>
    </location>
</feature>
<feature type="helix" evidence="4">
    <location>
        <begin position="88"/>
        <end position="96"/>
    </location>
</feature>
<feature type="helix" evidence="4">
    <location>
        <begin position="103"/>
        <end position="136"/>
    </location>
</feature>
<feature type="helix" evidence="4">
    <location>
        <begin position="140"/>
        <end position="142"/>
    </location>
</feature>
<feature type="helix" evidence="4">
    <location>
        <begin position="146"/>
        <end position="163"/>
    </location>
</feature>
<feature type="helix" evidence="4">
    <location>
        <begin position="166"/>
        <end position="170"/>
    </location>
</feature>
<feature type="helix" evidence="4">
    <location>
        <begin position="182"/>
        <end position="184"/>
    </location>
</feature>
<feature type="helix" evidence="4">
    <location>
        <begin position="192"/>
        <end position="206"/>
    </location>
</feature>
<feature type="helix" evidence="4">
    <location>
        <begin position="208"/>
        <end position="223"/>
    </location>
</feature>
<feature type="strand" evidence="4">
    <location>
        <begin position="226"/>
        <end position="228"/>
    </location>
</feature>
<feature type="helix" evidence="4">
    <location>
        <begin position="235"/>
        <end position="270"/>
    </location>
</feature>
<feature type="helix" evidence="4">
    <location>
        <begin position="277"/>
        <end position="294"/>
    </location>
</feature>
<feature type="helix" evidence="4">
    <location>
        <begin position="297"/>
        <end position="306"/>
    </location>
</feature>
<feature type="strand" evidence="4">
    <location>
        <begin position="310"/>
        <end position="312"/>
    </location>
</feature>
<comment type="function">
    <text>Putative receptor for purines coupled to G-proteins.</text>
</comment>
<comment type="subcellular location">
    <subcellularLocation>
        <location>Cell membrane</location>
        <topology>Multi-pass membrane protein</topology>
    </subcellularLocation>
</comment>
<comment type="tissue specificity">
    <text evidence="3">Weakly expressed in blood leukocytes.</text>
</comment>
<comment type="developmental stage">
    <text>Up-regulated during promyelocytic cell differentiation along the monocytic pathway, but not during granulocytic differentiation.</text>
</comment>
<comment type="similarity">
    <text evidence="2">Belongs to the G-protein coupled receptor 1 family.</text>
</comment>
<reference key="1">
    <citation type="submission" date="1997-04" db="EMBL/GenBank/DDBJ databases">
        <title>Putative purinergic receptor related to P2Y5 and P2Y9 is localized on the X chromosome.</title>
        <authorList>
            <person name="Bohm S.K."/>
        </authorList>
    </citation>
    <scope>NUCLEOTIDE SEQUENCE [GENOMIC DNA]</scope>
</reference>
<reference key="2">
    <citation type="submission" date="2003-04" db="EMBL/GenBank/DDBJ databases">
        <title>cDNA clones of human proteins involved in signal transduction sequenced by the Guthrie cDNA resource center (www.cdna.org).</title>
        <authorList>
            <person name="Warren C.N."/>
            <person name="Aronstam R.S."/>
            <person name="Sharma S.V."/>
        </authorList>
    </citation>
    <scope>NUCLEOTIDE SEQUENCE [GENOMIC DNA]</scope>
</reference>
<reference key="3">
    <citation type="journal article" date="2005" name="Nature">
        <title>The DNA sequence of the human X chromosome.</title>
        <authorList>
            <person name="Ross M.T."/>
            <person name="Grafham D.V."/>
            <person name="Coffey A.J."/>
            <person name="Scherer S."/>
            <person name="McLay K."/>
            <person name="Muzny D."/>
            <person name="Platzer M."/>
            <person name="Howell G.R."/>
            <person name="Burrows C."/>
            <person name="Bird C.P."/>
            <person name="Frankish A."/>
            <person name="Lovell F.L."/>
            <person name="Howe K.L."/>
            <person name="Ashurst J.L."/>
            <person name="Fulton R.S."/>
            <person name="Sudbrak R."/>
            <person name="Wen G."/>
            <person name="Jones M.C."/>
            <person name="Hurles M.E."/>
            <person name="Andrews T.D."/>
            <person name="Scott C.E."/>
            <person name="Searle S."/>
            <person name="Ramser J."/>
            <person name="Whittaker A."/>
            <person name="Deadman R."/>
            <person name="Carter N.P."/>
            <person name="Hunt S.E."/>
            <person name="Chen R."/>
            <person name="Cree A."/>
            <person name="Gunaratne P."/>
            <person name="Havlak P."/>
            <person name="Hodgson A."/>
            <person name="Metzker M.L."/>
            <person name="Richards S."/>
            <person name="Scott G."/>
            <person name="Steffen D."/>
            <person name="Sodergren E."/>
            <person name="Wheeler D.A."/>
            <person name="Worley K.C."/>
            <person name="Ainscough R."/>
            <person name="Ambrose K.D."/>
            <person name="Ansari-Lari M.A."/>
            <person name="Aradhya S."/>
            <person name="Ashwell R.I."/>
            <person name="Babbage A.K."/>
            <person name="Bagguley C.L."/>
            <person name="Ballabio A."/>
            <person name="Banerjee R."/>
            <person name="Barker G.E."/>
            <person name="Barlow K.F."/>
            <person name="Barrett I.P."/>
            <person name="Bates K.N."/>
            <person name="Beare D.M."/>
            <person name="Beasley H."/>
            <person name="Beasley O."/>
            <person name="Beck A."/>
            <person name="Bethel G."/>
            <person name="Blechschmidt K."/>
            <person name="Brady N."/>
            <person name="Bray-Allen S."/>
            <person name="Bridgeman A.M."/>
            <person name="Brown A.J."/>
            <person name="Brown M.J."/>
            <person name="Bonnin D."/>
            <person name="Bruford E.A."/>
            <person name="Buhay C."/>
            <person name="Burch P."/>
            <person name="Burford D."/>
            <person name="Burgess J."/>
            <person name="Burrill W."/>
            <person name="Burton J."/>
            <person name="Bye J.M."/>
            <person name="Carder C."/>
            <person name="Carrel L."/>
            <person name="Chako J."/>
            <person name="Chapman J.C."/>
            <person name="Chavez D."/>
            <person name="Chen E."/>
            <person name="Chen G."/>
            <person name="Chen Y."/>
            <person name="Chen Z."/>
            <person name="Chinault C."/>
            <person name="Ciccodicola A."/>
            <person name="Clark S.Y."/>
            <person name="Clarke G."/>
            <person name="Clee C.M."/>
            <person name="Clegg S."/>
            <person name="Clerc-Blankenburg K."/>
            <person name="Clifford K."/>
            <person name="Cobley V."/>
            <person name="Cole C.G."/>
            <person name="Conquer J.S."/>
            <person name="Corby N."/>
            <person name="Connor R.E."/>
            <person name="David R."/>
            <person name="Davies J."/>
            <person name="Davis C."/>
            <person name="Davis J."/>
            <person name="Delgado O."/>
            <person name="Deshazo D."/>
            <person name="Dhami P."/>
            <person name="Ding Y."/>
            <person name="Dinh H."/>
            <person name="Dodsworth S."/>
            <person name="Draper H."/>
            <person name="Dugan-Rocha S."/>
            <person name="Dunham A."/>
            <person name="Dunn M."/>
            <person name="Durbin K.J."/>
            <person name="Dutta I."/>
            <person name="Eades T."/>
            <person name="Ellwood M."/>
            <person name="Emery-Cohen A."/>
            <person name="Errington H."/>
            <person name="Evans K.L."/>
            <person name="Faulkner L."/>
            <person name="Francis F."/>
            <person name="Frankland J."/>
            <person name="Fraser A.E."/>
            <person name="Galgoczy P."/>
            <person name="Gilbert J."/>
            <person name="Gill R."/>
            <person name="Gloeckner G."/>
            <person name="Gregory S.G."/>
            <person name="Gribble S."/>
            <person name="Griffiths C."/>
            <person name="Grocock R."/>
            <person name="Gu Y."/>
            <person name="Gwilliam R."/>
            <person name="Hamilton C."/>
            <person name="Hart E.A."/>
            <person name="Hawes A."/>
            <person name="Heath P.D."/>
            <person name="Heitmann K."/>
            <person name="Hennig S."/>
            <person name="Hernandez J."/>
            <person name="Hinzmann B."/>
            <person name="Ho S."/>
            <person name="Hoffs M."/>
            <person name="Howden P.J."/>
            <person name="Huckle E.J."/>
            <person name="Hume J."/>
            <person name="Hunt P.J."/>
            <person name="Hunt A.R."/>
            <person name="Isherwood J."/>
            <person name="Jacob L."/>
            <person name="Johnson D."/>
            <person name="Jones S."/>
            <person name="de Jong P.J."/>
            <person name="Joseph S.S."/>
            <person name="Keenan S."/>
            <person name="Kelly S."/>
            <person name="Kershaw J.K."/>
            <person name="Khan Z."/>
            <person name="Kioschis P."/>
            <person name="Klages S."/>
            <person name="Knights A.J."/>
            <person name="Kosiura A."/>
            <person name="Kovar-Smith C."/>
            <person name="Laird G.K."/>
            <person name="Langford C."/>
            <person name="Lawlor S."/>
            <person name="Leversha M."/>
            <person name="Lewis L."/>
            <person name="Liu W."/>
            <person name="Lloyd C."/>
            <person name="Lloyd D.M."/>
            <person name="Loulseged H."/>
            <person name="Loveland J.E."/>
            <person name="Lovell J.D."/>
            <person name="Lozado R."/>
            <person name="Lu J."/>
            <person name="Lyne R."/>
            <person name="Ma J."/>
            <person name="Maheshwari M."/>
            <person name="Matthews L.H."/>
            <person name="McDowall J."/>
            <person name="McLaren S."/>
            <person name="McMurray A."/>
            <person name="Meidl P."/>
            <person name="Meitinger T."/>
            <person name="Milne S."/>
            <person name="Miner G."/>
            <person name="Mistry S.L."/>
            <person name="Morgan M."/>
            <person name="Morris S."/>
            <person name="Mueller I."/>
            <person name="Mullikin J.C."/>
            <person name="Nguyen N."/>
            <person name="Nordsiek G."/>
            <person name="Nyakatura G."/>
            <person name="O'dell C.N."/>
            <person name="Okwuonu G."/>
            <person name="Palmer S."/>
            <person name="Pandian R."/>
            <person name="Parker D."/>
            <person name="Parrish J."/>
            <person name="Pasternak S."/>
            <person name="Patel D."/>
            <person name="Pearce A.V."/>
            <person name="Pearson D.M."/>
            <person name="Pelan S.E."/>
            <person name="Perez L."/>
            <person name="Porter K.M."/>
            <person name="Ramsey Y."/>
            <person name="Reichwald K."/>
            <person name="Rhodes S."/>
            <person name="Ridler K.A."/>
            <person name="Schlessinger D."/>
            <person name="Schueler M.G."/>
            <person name="Sehra H.K."/>
            <person name="Shaw-Smith C."/>
            <person name="Shen H."/>
            <person name="Sheridan E.M."/>
            <person name="Shownkeen R."/>
            <person name="Skuce C.D."/>
            <person name="Smith M.L."/>
            <person name="Sotheran E.C."/>
            <person name="Steingruber H.E."/>
            <person name="Steward C.A."/>
            <person name="Storey R."/>
            <person name="Swann R.M."/>
            <person name="Swarbreck D."/>
            <person name="Tabor P.E."/>
            <person name="Taudien S."/>
            <person name="Taylor T."/>
            <person name="Teague B."/>
            <person name="Thomas K."/>
            <person name="Thorpe A."/>
            <person name="Timms K."/>
            <person name="Tracey A."/>
            <person name="Trevanion S."/>
            <person name="Tromans A.C."/>
            <person name="d'Urso M."/>
            <person name="Verduzco D."/>
            <person name="Villasana D."/>
            <person name="Waldron L."/>
            <person name="Wall M."/>
            <person name="Wang Q."/>
            <person name="Warren J."/>
            <person name="Warry G.L."/>
            <person name="Wei X."/>
            <person name="West A."/>
            <person name="Whitehead S.L."/>
            <person name="Whiteley M.N."/>
            <person name="Wilkinson J.E."/>
            <person name="Willey D.L."/>
            <person name="Williams G."/>
            <person name="Williams L."/>
            <person name="Williamson A."/>
            <person name="Williamson H."/>
            <person name="Wilming L."/>
            <person name="Woodmansey R.L."/>
            <person name="Wray P.W."/>
            <person name="Yen J."/>
            <person name="Zhang J."/>
            <person name="Zhou J."/>
            <person name="Zoghbi H."/>
            <person name="Zorilla S."/>
            <person name="Buck D."/>
            <person name="Reinhardt R."/>
            <person name="Poustka A."/>
            <person name="Rosenthal A."/>
            <person name="Lehrach H."/>
            <person name="Meindl A."/>
            <person name="Minx P.J."/>
            <person name="Hillier L.W."/>
            <person name="Willard H.F."/>
            <person name="Wilson R.K."/>
            <person name="Waterston R.H."/>
            <person name="Rice C.M."/>
            <person name="Vaudin M."/>
            <person name="Coulson A."/>
            <person name="Nelson D.L."/>
            <person name="Weinstock G."/>
            <person name="Sulston J.E."/>
            <person name="Durbin R.M."/>
            <person name="Hubbard T."/>
            <person name="Gibbs R.A."/>
            <person name="Beck S."/>
            <person name="Rogers J."/>
            <person name="Bentley D.R."/>
        </authorList>
    </citation>
    <scope>NUCLEOTIDE SEQUENCE [LARGE SCALE GENOMIC DNA]</scope>
</reference>
<reference key="4">
    <citation type="submission" date="2005-09" db="EMBL/GenBank/DDBJ databases">
        <authorList>
            <person name="Mural R.J."/>
            <person name="Istrail S."/>
            <person name="Sutton G.G."/>
            <person name="Florea L."/>
            <person name="Halpern A.L."/>
            <person name="Mobarry C.M."/>
            <person name="Lippert R."/>
            <person name="Walenz B."/>
            <person name="Shatkay H."/>
            <person name="Dew I."/>
            <person name="Miller J.R."/>
            <person name="Flanigan M.J."/>
            <person name="Edwards N.J."/>
            <person name="Bolanos R."/>
            <person name="Fasulo D."/>
            <person name="Halldorsson B.V."/>
            <person name="Hannenhalli S."/>
            <person name="Turner R."/>
            <person name="Yooseph S."/>
            <person name="Lu F."/>
            <person name="Nusskern D.R."/>
            <person name="Shue B.C."/>
            <person name="Zheng X.H."/>
            <person name="Zhong F."/>
            <person name="Delcher A.L."/>
            <person name="Huson D.H."/>
            <person name="Kravitz S.A."/>
            <person name="Mouchard L."/>
            <person name="Reinert K."/>
            <person name="Remington K.A."/>
            <person name="Clark A.G."/>
            <person name="Waterman M.S."/>
            <person name="Eichler E.E."/>
            <person name="Adams M.D."/>
            <person name="Hunkapiller M.W."/>
            <person name="Myers E.W."/>
            <person name="Venter J.C."/>
        </authorList>
    </citation>
    <scope>NUCLEOTIDE SEQUENCE [LARGE SCALE GENOMIC DNA]</scope>
</reference>
<reference key="5">
    <citation type="journal article" date="2004" name="Genome Res.">
        <title>The status, quality, and expansion of the NIH full-length cDNA project: the Mammalian Gene Collection (MGC).</title>
        <authorList>
            <consortium name="The MGC Project Team"/>
        </authorList>
    </citation>
    <scope>NUCLEOTIDE SEQUENCE [LARGE SCALE MRNA]</scope>
    <source>
        <tissue>Blood</tissue>
    </source>
</reference>
<reference key="6">
    <citation type="journal article" date="2000" name="Biochim. Biophys. Acta">
        <title>Expression of purinergic receptors (ionotropic P2X1-7 and metabotropic P2Y1-11) during myeloid differentiation of HL60 cells.</title>
        <authorList>
            <person name="Adrian K."/>
            <person name="Bernhard M.K."/>
            <person name="Breitinger H.-G."/>
            <person name="Ogilvie A."/>
        </authorList>
    </citation>
    <scope>TISSUE SPECIFICITY</scope>
</reference>
<keyword id="KW-0002">3D-structure</keyword>
<keyword id="KW-1003">Cell membrane</keyword>
<keyword id="KW-1015">Disulfide bond</keyword>
<keyword id="KW-0297">G-protein coupled receptor</keyword>
<keyword id="KW-0325">Glycoprotein</keyword>
<keyword id="KW-0472">Membrane</keyword>
<keyword id="KW-1267">Proteomics identification</keyword>
<keyword id="KW-0675">Receptor</keyword>
<keyword id="KW-1185">Reference proteome</keyword>
<keyword id="KW-0807">Transducer</keyword>
<keyword id="KW-0812">Transmembrane</keyword>
<keyword id="KW-1133">Transmembrane helix</keyword>
<dbReference type="EMBL" id="AF000545">
    <property type="protein sequence ID" value="AAB57836.1"/>
    <property type="molecule type" value="Genomic_DNA"/>
</dbReference>
<dbReference type="EMBL" id="AY275461">
    <property type="protein sequence ID" value="AAP32293.1"/>
    <property type="molecule type" value="Genomic_DNA"/>
</dbReference>
<dbReference type="EMBL" id="Z82200">
    <property type="status" value="NOT_ANNOTATED_CDS"/>
    <property type="molecule type" value="Genomic_DNA"/>
</dbReference>
<dbReference type="EMBL" id="CH471104">
    <property type="protein sequence ID" value="EAW98594.1"/>
    <property type="molecule type" value="Genomic_DNA"/>
</dbReference>
<dbReference type="EMBL" id="CH471104">
    <property type="protein sequence ID" value="EAW98595.1"/>
    <property type="molecule type" value="Genomic_DNA"/>
</dbReference>
<dbReference type="EMBL" id="BC051875">
    <property type="protein sequence ID" value="AAH51875.2"/>
    <property type="molecule type" value="mRNA"/>
</dbReference>
<dbReference type="EMBL" id="BC095498">
    <property type="protein sequence ID" value="AAH95498.1"/>
    <property type="molecule type" value="mRNA"/>
</dbReference>
<dbReference type="CCDS" id="CCDS14442.1"/>
<dbReference type="RefSeq" id="NP_001311147.1">
    <property type="nucleotide sequence ID" value="NM_001324218.2"/>
</dbReference>
<dbReference type="RefSeq" id="NP_055314.1">
    <property type="nucleotide sequence ID" value="NM_014499.4"/>
</dbReference>
<dbReference type="RefSeq" id="NP_938147.1">
    <property type="nucleotide sequence ID" value="NM_198333.3"/>
</dbReference>
<dbReference type="RefSeq" id="XP_047297954.1">
    <property type="nucleotide sequence ID" value="XM_047441998.1"/>
</dbReference>
<dbReference type="RefSeq" id="XP_054182828.1">
    <property type="nucleotide sequence ID" value="XM_054326853.1"/>
</dbReference>
<dbReference type="PDB" id="8KGG">
    <property type="method" value="EM"/>
    <property type="resolution" value="3.06 A"/>
    <property type="chains" value="R=1-339"/>
</dbReference>
<dbReference type="PDBsum" id="8KGG"/>
<dbReference type="EMDB" id="EMD-37220"/>
<dbReference type="SMR" id="O00398"/>
<dbReference type="BioGRID" id="118147">
    <property type="interactions" value="105"/>
</dbReference>
<dbReference type="FunCoup" id="O00398">
    <property type="interactions" value="1002"/>
</dbReference>
<dbReference type="IntAct" id="O00398">
    <property type="interactions" value="105"/>
</dbReference>
<dbReference type="STRING" id="9606.ENSP00000171757"/>
<dbReference type="BindingDB" id="O00398"/>
<dbReference type="ChEMBL" id="CHEMBL3562166"/>
<dbReference type="DrugBank" id="DB01069">
    <property type="generic name" value="Promethazine"/>
</dbReference>
<dbReference type="GuidetoPHARMACOLOGY" id="165"/>
<dbReference type="GlyCosmos" id="O00398">
    <property type="glycosylation" value="3 sites, No reported glycans"/>
</dbReference>
<dbReference type="GlyGen" id="O00398">
    <property type="glycosylation" value="5 sites, 1 N-linked glycan (1 site), 1 O-linked glycan (1 site)"/>
</dbReference>
<dbReference type="iPTMnet" id="O00398"/>
<dbReference type="PhosphoSitePlus" id="O00398"/>
<dbReference type="BioMuta" id="P2RY10"/>
<dbReference type="MassIVE" id="O00398"/>
<dbReference type="PaxDb" id="9606-ENSP00000171757"/>
<dbReference type="PeptideAtlas" id="O00398"/>
<dbReference type="ProteomicsDB" id="47864"/>
<dbReference type="Antibodypedia" id="14108">
    <property type="antibodies" value="188 antibodies from 29 providers"/>
</dbReference>
<dbReference type="DNASU" id="27334"/>
<dbReference type="Ensembl" id="ENST00000171757.3">
    <property type="protein sequence ID" value="ENSP00000171757.2"/>
    <property type="gene ID" value="ENSG00000078589.13"/>
</dbReference>
<dbReference type="Ensembl" id="ENST00000544091.1">
    <property type="protein sequence ID" value="ENSP00000443138.1"/>
    <property type="gene ID" value="ENSG00000078589.13"/>
</dbReference>
<dbReference type="GeneID" id="27334"/>
<dbReference type="KEGG" id="hsa:27334"/>
<dbReference type="MANE-Select" id="ENST00000171757.3">
    <property type="protein sequence ID" value="ENSP00000171757.2"/>
    <property type="RefSeq nucleotide sequence ID" value="NM_014499.4"/>
    <property type="RefSeq protein sequence ID" value="NP_055314.1"/>
</dbReference>
<dbReference type="UCSC" id="uc004ede.4">
    <property type="organism name" value="human"/>
</dbReference>
<dbReference type="AGR" id="HGNC:19906"/>
<dbReference type="CTD" id="27334"/>
<dbReference type="DisGeNET" id="27334"/>
<dbReference type="GeneCards" id="P2RY10"/>
<dbReference type="HGNC" id="HGNC:19906">
    <property type="gene designation" value="P2RY10"/>
</dbReference>
<dbReference type="HPA" id="ENSG00000078589">
    <property type="expression patterns" value="Tissue enhanced (lymphoid)"/>
</dbReference>
<dbReference type="MIM" id="300529">
    <property type="type" value="gene"/>
</dbReference>
<dbReference type="neXtProt" id="NX_O00398"/>
<dbReference type="OpenTargets" id="ENSG00000078589"/>
<dbReference type="PharmGKB" id="PA134873055"/>
<dbReference type="VEuPathDB" id="HostDB:ENSG00000078589"/>
<dbReference type="eggNOG" id="ENOG502QTX2">
    <property type="taxonomic scope" value="Eukaryota"/>
</dbReference>
<dbReference type="GeneTree" id="ENSGT01130000278275"/>
<dbReference type="HOGENOM" id="CLU_009579_8_2_1"/>
<dbReference type="InParanoid" id="O00398"/>
<dbReference type="OMA" id="KTESCFA"/>
<dbReference type="OrthoDB" id="9435792at2759"/>
<dbReference type="PAN-GO" id="O00398">
    <property type="GO annotations" value="4 GO annotations based on evolutionary models"/>
</dbReference>
<dbReference type="PhylomeDB" id="O00398"/>
<dbReference type="TreeFam" id="TF350009"/>
<dbReference type="PathwayCommons" id="O00398"/>
<dbReference type="Reactome" id="R-HSA-416476">
    <property type="pathway name" value="G alpha (q) signalling events"/>
</dbReference>
<dbReference type="Reactome" id="R-HSA-417957">
    <property type="pathway name" value="P2Y receptors"/>
</dbReference>
<dbReference type="SignaLink" id="O00398"/>
<dbReference type="SIGNOR" id="O00398"/>
<dbReference type="BioGRID-ORCS" id="27334">
    <property type="hits" value="23 hits in 766 CRISPR screens"/>
</dbReference>
<dbReference type="GeneWiki" id="P2RY10"/>
<dbReference type="GenomeRNAi" id="27334"/>
<dbReference type="Pharos" id="O00398">
    <property type="development level" value="Tchem"/>
</dbReference>
<dbReference type="PRO" id="PR:O00398"/>
<dbReference type="Proteomes" id="UP000005640">
    <property type="component" value="Chromosome X"/>
</dbReference>
<dbReference type="RNAct" id="O00398">
    <property type="molecule type" value="protein"/>
</dbReference>
<dbReference type="Bgee" id="ENSG00000078589">
    <property type="expression patterns" value="Expressed in lymph node and 108 other cell types or tissues"/>
</dbReference>
<dbReference type="GO" id="GO:0005886">
    <property type="term" value="C:plasma membrane"/>
    <property type="evidence" value="ECO:0000318"/>
    <property type="project" value="GO_Central"/>
</dbReference>
<dbReference type="GO" id="GO:0004930">
    <property type="term" value="F:G protein-coupled receptor activity"/>
    <property type="evidence" value="ECO:0000318"/>
    <property type="project" value="GO_Central"/>
</dbReference>
<dbReference type="GO" id="GO:0007186">
    <property type="term" value="P:G protein-coupled receptor signaling pathway"/>
    <property type="evidence" value="ECO:0000318"/>
    <property type="project" value="GO_Central"/>
</dbReference>
<dbReference type="CDD" id="cd15153">
    <property type="entry name" value="7tmA_P2Y10"/>
    <property type="match status" value="1"/>
</dbReference>
<dbReference type="FunFam" id="1.20.1070.10:FF:000146">
    <property type="entry name" value="putative P2Y purinoceptor 10 isoform X1"/>
    <property type="match status" value="1"/>
</dbReference>
<dbReference type="Gene3D" id="1.20.1070.10">
    <property type="entry name" value="Rhodopsin 7-helix transmembrane proteins"/>
    <property type="match status" value="1"/>
</dbReference>
<dbReference type="InterPro" id="IPR000276">
    <property type="entry name" value="GPCR_Rhodpsn"/>
</dbReference>
<dbReference type="InterPro" id="IPR017452">
    <property type="entry name" value="GPCR_Rhodpsn_7TM"/>
</dbReference>
<dbReference type="PANTHER" id="PTHR24232">
    <property type="entry name" value="G-PROTEIN COUPLED RECEPTOR"/>
    <property type="match status" value="1"/>
</dbReference>
<dbReference type="PANTHER" id="PTHR24232:SF47">
    <property type="entry name" value="P2Y PURINOCEPTOR 10-RELATED"/>
    <property type="match status" value="1"/>
</dbReference>
<dbReference type="Pfam" id="PF00001">
    <property type="entry name" value="7tm_1"/>
    <property type="match status" value="1"/>
</dbReference>
<dbReference type="PRINTS" id="PR00237">
    <property type="entry name" value="GPCRRHODOPSN"/>
</dbReference>
<dbReference type="PRINTS" id="PR01157">
    <property type="entry name" value="P2YPURNOCPTR"/>
</dbReference>
<dbReference type="SUPFAM" id="SSF81321">
    <property type="entry name" value="Family A G protein-coupled receptor-like"/>
    <property type="match status" value="1"/>
</dbReference>
<dbReference type="PROSITE" id="PS50262">
    <property type="entry name" value="G_PROTEIN_RECEP_F1_2"/>
    <property type="match status" value="1"/>
</dbReference>
<sequence length="339" mass="38774">MANLDKYTETFKMGSNSTSTAEIYCNVTNVKFQYSLYATTYILIFIPGLLANSAALWVLCRFISKKNKAIIFMINLSVADLAHVLSLPLRIYYYISHHWPFQRALCLLCFYLKYLNMYASICFLTCISLQRCFFLLKPFRARDWKRRYDVGISAAIWIVVGTACLPFPILRSTDLNNNKSCFADLGYKQMNAVALVGMITVAELAGFVIPVIIIAWCTWKTTISLRQPPMAFQGISERQKALRMVFMCAAVFFICFTPYHINFIFYTMVKETIISSCPVVRIALYFHPFCLCLASLCCLLDPILYYFMASEFRDQLSRHGSSVTRSRLMSKESGSSMIG</sequence>
<protein>
    <recommendedName>
        <fullName>Putative P2Y purinoceptor 10</fullName>
        <shortName>P2Y10</shortName>
    </recommendedName>
    <alternativeName>
        <fullName>P2Y-like receptor</fullName>
    </alternativeName>
</protein>
<name>P2Y10_HUMAN</name>
<organism>
    <name type="scientific">Homo sapiens</name>
    <name type="common">Human</name>
    <dbReference type="NCBI Taxonomy" id="9606"/>
    <lineage>
        <taxon>Eukaryota</taxon>
        <taxon>Metazoa</taxon>
        <taxon>Chordata</taxon>
        <taxon>Craniata</taxon>
        <taxon>Vertebrata</taxon>
        <taxon>Euteleostomi</taxon>
        <taxon>Mammalia</taxon>
        <taxon>Eutheria</taxon>
        <taxon>Euarchontoglires</taxon>
        <taxon>Primates</taxon>
        <taxon>Haplorrhini</taxon>
        <taxon>Catarrhini</taxon>
        <taxon>Hominidae</taxon>
        <taxon>Homo</taxon>
    </lineage>
</organism>
<proteinExistence type="evidence at protein level"/>
<gene>
    <name type="primary">P2RY10</name>
</gene>
<accession>O00398</accession>
<accession>D3DTE5</accession>
<accession>Q4VBN7</accession>
<accession>Q86V16</accession>